<keyword id="KW-0963">Cytoplasm</keyword>
<keyword id="KW-0648">Protein biosynthesis</keyword>
<keyword id="KW-1185">Reference proteome</keyword>
<comment type="function">
    <text evidence="1">Responsible for the release of ribosomes from messenger RNA at the termination of protein biosynthesis. May increase the efficiency of translation by recycling ribosomes from one round of translation to another.</text>
</comment>
<comment type="subcellular location">
    <subcellularLocation>
        <location evidence="1">Cytoplasm</location>
    </subcellularLocation>
</comment>
<comment type="similarity">
    <text evidence="1">Belongs to the RRF family.</text>
</comment>
<protein>
    <recommendedName>
        <fullName evidence="1">Ribosome-recycling factor</fullName>
        <shortName evidence="1">RRF</shortName>
    </recommendedName>
    <alternativeName>
        <fullName evidence="1">Ribosome-releasing factor</fullName>
    </alternativeName>
</protein>
<name>RRF_DESPS</name>
<dbReference type="EMBL" id="CR522870">
    <property type="protein sequence ID" value="CAG35886.1"/>
    <property type="molecule type" value="Genomic_DNA"/>
</dbReference>
<dbReference type="RefSeq" id="WP_011188398.1">
    <property type="nucleotide sequence ID" value="NC_006138.1"/>
</dbReference>
<dbReference type="SMR" id="Q6AP38"/>
<dbReference type="STRING" id="177439.DP1157"/>
<dbReference type="KEGG" id="dps:DP1157"/>
<dbReference type="eggNOG" id="COG0233">
    <property type="taxonomic scope" value="Bacteria"/>
</dbReference>
<dbReference type="HOGENOM" id="CLU_073981_2_0_7"/>
<dbReference type="OrthoDB" id="9804006at2"/>
<dbReference type="Proteomes" id="UP000000602">
    <property type="component" value="Chromosome"/>
</dbReference>
<dbReference type="GO" id="GO:0005737">
    <property type="term" value="C:cytoplasm"/>
    <property type="evidence" value="ECO:0007669"/>
    <property type="project" value="UniProtKB-SubCell"/>
</dbReference>
<dbReference type="GO" id="GO:0043023">
    <property type="term" value="F:ribosomal large subunit binding"/>
    <property type="evidence" value="ECO:0007669"/>
    <property type="project" value="TreeGrafter"/>
</dbReference>
<dbReference type="GO" id="GO:0006415">
    <property type="term" value="P:translational termination"/>
    <property type="evidence" value="ECO:0007669"/>
    <property type="project" value="UniProtKB-UniRule"/>
</dbReference>
<dbReference type="CDD" id="cd00520">
    <property type="entry name" value="RRF"/>
    <property type="match status" value="1"/>
</dbReference>
<dbReference type="FunFam" id="1.10.132.20:FF:000001">
    <property type="entry name" value="Ribosome-recycling factor"/>
    <property type="match status" value="1"/>
</dbReference>
<dbReference type="FunFam" id="3.30.1360.40:FF:000001">
    <property type="entry name" value="Ribosome-recycling factor"/>
    <property type="match status" value="1"/>
</dbReference>
<dbReference type="Gene3D" id="3.30.1360.40">
    <property type="match status" value="1"/>
</dbReference>
<dbReference type="Gene3D" id="1.10.132.20">
    <property type="entry name" value="Ribosome-recycling factor"/>
    <property type="match status" value="1"/>
</dbReference>
<dbReference type="HAMAP" id="MF_00040">
    <property type="entry name" value="RRF"/>
    <property type="match status" value="1"/>
</dbReference>
<dbReference type="InterPro" id="IPR002661">
    <property type="entry name" value="Ribosome_recyc_fac"/>
</dbReference>
<dbReference type="InterPro" id="IPR023584">
    <property type="entry name" value="Ribosome_recyc_fac_dom"/>
</dbReference>
<dbReference type="InterPro" id="IPR036191">
    <property type="entry name" value="RRF_sf"/>
</dbReference>
<dbReference type="NCBIfam" id="TIGR00496">
    <property type="entry name" value="frr"/>
    <property type="match status" value="1"/>
</dbReference>
<dbReference type="PANTHER" id="PTHR20982:SF3">
    <property type="entry name" value="MITOCHONDRIAL RIBOSOME RECYCLING FACTOR PSEUDO 1"/>
    <property type="match status" value="1"/>
</dbReference>
<dbReference type="PANTHER" id="PTHR20982">
    <property type="entry name" value="RIBOSOME RECYCLING FACTOR"/>
    <property type="match status" value="1"/>
</dbReference>
<dbReference type="Pfam" id="PF01765">
    <property type="entry name" value="RRF"/>
    <property type="match status" value="1"/>
</dbReference>
<dbReference type="SUPFAM" id="SSF55194">
    <property type="entry name" value="Ribosome recycling factor, RRF"/>
    <property type="match status" value="1"/>
</dbReference>
<reference key="1">
    <citation type="journal article" date="2004" name="Environ. Microbiol.">
        <title>The genome of Desulfotalea psychrophila, a sulfate-reducing bacterium from permanently cold Arctic sediments.</title>
        <authorList>
            <person name="Rabus R."/>
            <person name="Ruepp A."/>
            <person name="Frickey T."/>
            <person name="Rattei T."/>
            <person name="Fartmann B."/>
            <person name="Stark M."/>
            <person name="Bauer M."/>
            <person name="Zibat A."/>
            <person name="Lombardot T."/>
            <person name="Becker I."/>
            <person name="Amann J."/>
            <person name="Gellner K."/>
            <person name="Teeling H."/>
            <person name="Leuschner W.D."/>
            <person name="Gloeckner F.-O."/>
            <person name="Lupas A.N."/>
            <person name="Amann R."/>
            <person name="Klenk H.-P."/>
        </authorList>
    </citation>
    <scope>NUCLEOTIDE SEQUENCE [LARGE SCALE GENOMIC DNA]</scope>
    <source>
        <strain>DSM 12343 / LSv54</strain>
    </source>
</reference>
<accession>Q6AP38</accession>
<gene>
    <name evidence="1" type="primary">frr</name>
    <name type="ordered locus">DP1157</name>
</gene>
<sequence length="184" mass="20820">MSEVIVEMSGRMAKSVEAFKNDLSRVRTGRASISILDDITVVAYGSTMPLNQVATLTIPESRMIALQPWDPQMIPPIEKAILKSGLGLNPVNDGKVVRLNIPQLTEDRRKDLVKQVKKIAEEFRVAIRNVRRDAIDTLKLQKKDKEISEDDLFKLQDDAQKETDIYIKQLDEVSASKEKEVMEV</sequence>
<feature type="chain" id="PRO_0000167452" description="Ribosome-recycling factor">
    <location>
        <begin position="1"/>
        <end position="184"/>
    </location>
</feature>
<organism>
    <name type="scientific">Desulfotalea psychrophila (strain LSv54 / DSM 12343)</name>
    <dbReference type="NCBI Taxonomy" id="177439"/>
    <lineage>
        <taxon>Bacteria</taxon>
        <taxon>Pseudomonadati</taxon>
        <taxon>Thermodesulfobacteriota</taxon>
        <taxon>Desulfobulbia</taxon>
        <taxon>Desulfobulbales</taxon>
        <taxon>Desulfocapsaceae</taxon>
        <taxon>Desulfotalea</taxon>
    </lineage>
</organism>
<evidence type="ECO:0000255" key="1">
    <source>
        <dbReference type="HAMAP-Rule" id="MF_00040"/>
    </source>
</evidence>
<proteinExistence type="inferred from homology"/>